<accession>C1C881</accession>
<evidence type="ECO:0000250" key="1"/>
<evidence type="ECO:0000255" key="2">
    <source>
        <dbReference type="HAMAP-Rule" id="MF_00118"/>
    </source>
</evidence>
<keyword id="KW-0963">Cytoplasm</keyword>
<keyword id="KW-0251">Elongation factor</keyword>
<keyword id="KW-0342">GTP-binding</keyword>
<keyword id="KW-0378">Hydrolase</keyword>
<keyword id="KW-0460">Magnesium</keyword>
<keyword id="KW-0479">Metal-binding</keyword>
<keyword id="KW-0547">Nucleotide-binding</keyword>
<keyword id="KW-0648">Protein biosynthesis</keyword>
<proteinExistence type="inferred from homology"/>
<gene>
    <name evidence="2" type="primary">tuf</name>
    <name type="ordered locus">SP70585_1527</name>
</gene>
<sequence length="398" mass="43971">MAKEKYDRSKPHVNIGTIGHVDHGKTTLTAAITTVLARRLPSSVNQPKDYASIDAAPEERERGITINTAHVEYETEKRHYAHIDAPGHADYVKNMITGAAQMDGAILVVASTDGPMPQTREHILLSRQVGVKHLIVFMNKVDLVDDEELLELVEMEIRDLLSEYDFPGDDLPVIQGSALKALEGDSKYEDIVMELMNTVDEYIPEPERDTDKPLLLPVEDVFSITGRGTVASGRIDRGIVKVNDEIEIVGIKEETQKAVVTGVEMFRKQLDEGLAGDNVGVLLRGVQRDEIERGQVIAKPGSINPHTKFKGEVYILTKEEGGRHTPFFNNYRPQFYFRTTDVTGSIELPAGTEMVMPGDNVTIDVELIHPIAVEQGTTFSIREGGRTVGSGMVTEIEA</sequence>
<protein>
    <recommendedName>
        <fullName evidence="2">Elongation factor Tu</fullName>
        <shortName evidence="2">EF-Tu</shortName>
        <ecNumber evidence="2">3.6.5.3</ecNumber>
    </recommendedName>
</protein>
<name>EFTU_STRP7</name>
<dbReference type="EC" id="3.6.5.3" evidence="2"/>
<dbReference type="EMBL" id="CP000918">
    <property type="protein sequence ID" value="ACO16800.1"/>
    <property type="molecule type" value="Genomic_DNA"/>
</dbReference>
<dbReference type="RefSeq" id="WP_001040724.1">
    <property type="nucleotide sequence ID" value="NC_012468.1"/>
</dbReference>
<dbReference type="SMR" id="C1C881"/>
<dbReference type="GeneID" id="45653269"/>
<dbReference type="KEGG" id="snm:SP70585_1527"/>
<dbReference type="HOGENOM" id="CLU_007265_0_1_9"/>
<dbReference type="Proteomes" id="UP000002211">
    <property type="component" value="Chromosome"/>
</dbReference>
<dbReference type="GO" id="GO:0005829">
    <property type="term" value="C:cytosol"/>
    <property type="evidence" value="ECO:0007669"/>
    <property type="project" value="TreeGrafter"/>
</dbReference>
<dbReference type="GO" id="GO:0005525">
    <property type="term" value="F:GTP binding"/>
    <property type="evidence" value="ECO:0007669"/>
    <property type="project" value="UniProtKB-UniRule"/>
</dbReference>
<dbReference type="GO" id="GO:0003924">
    <property type="term" value="F:GTPase activity"/>
    <property type="evidence" value="ECO:0007669"/>
    <property type="project" value="InterPro"/>
</dbReference>
<dbReference type="GO" id="GO:0003746">
    <property type="term" value="F:translation elongation factor activity"/>
    <property type="evidence" value="ECO:0007669"/>
    <property type="project" value="UniProtKB-UniRule"/>
</dbReference>
<dbReference type="CDD" id="cd01884">
    <property type="entry name" value="EF_Tu"/>
    <property type="match status" value="1"/>
</dbReference>
<dbReference type="CDD" id="cd03697">
    <property type="entry name" value="EFTU_II"/>
    <property type="match status" value="1"/>
</dbReference>
<dbReference type="CDD" id="cd03707">
    <property type="entry name" value="EFTU_III"/>
    <property type="match status" value="1"/>
</dbReference>
<dbReference type="FunFam" id="2.40.30.10:FF:000001">
    <property type="entry name" value="Elongation factor Tu"/>
    <property type="match status" value="1"/>
</dbReference>
<dbReference type="FunFam" id="3.40.50.300:FF:000003">
    <property type="entry name" value="Elongation factor Tu"/>
    <property type="match status" value="1"/>
</dbReference>
<dbReference type="Gene3D" id="3.40.50.300">
    <property type="entry name" value="P-loop containing nucleotide triphosphate hydrolases"/>
    <property type="match status" value="1"/>
</dbReference>
<dbReference type="Gene3D" id="2.40.30.10">
    <property type="entry name" value="Translation factors"/>
    <property type="match status" value="2"/>
</dbReference>
<dbReference type="HAMAP" id="MF_00118_B">
    <property type="entry name" value="EF_Tu_B"/>
    <property type="match status" value="1"/>
</dbReference>
<dbReference type="InterPro" id="IPR041709">
    <property type="entry name" value="EF-Tu_GTP-bd"/>
</dbReference>
<dbReference type="InterPro" id="IPR050055">
    <property type="entry name" value="EF-Tu_GTPase"/>
</dbReference>
<dbReference type="InterPro" id="IPR004161">
    <property type="entry name" value="EFTu-like_2"/>
</dbReference>
<dbReference type="InterPro" id="IPR033720">
    <property type="entry name" value="EFTU_2"/>
</dbReference>
<dbReference type="InterPro" id="IPR031157">
    <property type="entry name" value="G_TR_CS"/>
</dbReference>
<dbReference type="InterPro" id="IPR027417">
    <property type="entry name" value="P-loop_NTPase"/>
</dbReference>
<dbReference type="InterPro" id="IPR005225">
    <property type="entry name" value="Small_GTP-bd"/>
</dbReference>
<dbReference type="InterPro" id="IPR000795">
    <property type="entry name" value="T_Tr_GTP-bd_dom"/>
</dbReference>
<dbReference type="InterPro" id="IPR009000">
    <property type="entry name" value="Transl_B-barrel_sf"/>
</dbReference>
<dbReference type="InterPro" id="IPR009001">
    <property type="entry name" value="Transl_elong_EF1A/Init_IF2_C"/>
</dbReference>
<dbReference type="InterPro" id="IPR004541">
    <property type="entry name" value="Transl_elong_EFTu/EF1A_bac/org"/>
</dbReference>
<dbReference type="InterPro" id="IPR004160">
    <property type="entry name" value="Transl_elong_EFTu/EF1A_C"/>
</dbReference>
<dbReference type="NCBIfam" id="TIGR00485">
    <property type="entry name" value="EF-Tu"/>
    <property type="match status" value="1"/>
</dbReference>
<dbReference type="NCBIfam" id="NF000766">
    <property type="entry name" value="PRK00049.1"/>
    <property type="match status" value="1"/>
</dbReference>
<dbReference type="NCBIfam" id="NF009372">
    <property type="entry name" value="PRK12735.1"/>
    <property type="match status" value="1"/>
</dbReference>
<dbReference type="NCBIfam" id="NF009373">
    <property type="entry name" value="PRK12736.1"/>
    <property type="match status" value="1"/>
</dbReference>
<dbReference type="NCBIfam" id="TIGR00231">
    <property type="entry name" value="small_GTP"/>
    <property type="match status" value="1"/>
</dbReference>
<dbReference type="PANTHER" id="PTHR43721:SF22">
    <property type="entry name" value="ELONGATION FACTOR TU, MITOCHONDRIAL"/>
    <property type="match status" value="1"/>
</dbReference>
<dbReference type="PANTHER" id="PTHR43721">
    <property type="entry name" value="ELONGATION FACTOR TU-RELATED"/>
    <property type="match status" value="1"/>
</dbReference>
<dbReference type="Pfam" id="PF00009">
    <property type="entry name" value="GTP_EFTU"/>
    <property type="match status" value="1"/>
</dbReference>
<dbReference type="Pfam" id="PF03144">
    <property type="entry name" value="GTP_EFTU_D2"/>
    <property type="match status" value="1"/>
</dbReference>
<dbReference type="Pfam" id="PF03143">
    <property type="entry name" value="GTP_EFTU_D3"/>
    <property type="match status" value="1"/>
</dbReference>
<dbReference type="PRINTS" id="PR00315">
    <property type="entry name" value="ELONGATNFCT"/>
</dbReference>
<dbReference type="SUPFAM" id="SSF50465">
    <property type="entry name" value="EF-Tu/eEF-1alpha/eIF2-gamma C-terminal domain"/>
    <property type="match status" value="1"/>
</dbReference>
<dbReference type="SUPFAM" id="SSF52540">
    <property type="entry name" value="P-loop containing nucleoside triphosphate hydrolases"/>
    <property type="match status" value="1"/>
</dbReference>
<dbReference type="SUPFAM" id="SSF50447">
    <property type="entry name" value="Translation proteins"/>
    <property type="match status" value="1"/>
</dbReference>
<dbReference type="PROSITE" id="PS00301">
    <property type="entry name" value="G_TR_1"/>
    <property type="match status" value="1"/>
</dbReference>
<dbReference type="PROSITE" id="PS51722">
    <property type="entry name" value="G_TR_2"/>
    <property type="match status" value="1"/>
</dbReference>
<comment type="function">
    <text evidence="2">GTP hydrolase that promotes the GTP-dependent binding of aminoacyl-tRNA to the A-site of ribosomes during protein biosynthesis.</text>
</comment>
<comment type="catalytic activity">
    <reaction evidence="2">
        <text>GTP + H2O = GDP + phosphate + H(+)</text>
        <dbReference type="Rhea" id="RHEA:19669"/>
        <dbReference type="ChEBI" id="CHEBI:15377"/>
        <dbReference type="ChEBI" id="CHEBI:15378"/>
        <dbReference type="ChEBI" id="CHEBI:37565"/>
        <dbReference type="ChEBI" id="CHEBI:43474"/>
        <dbReference type="ChEBI" id="CHEBI:58189"/>
        <dbReference type="EC" id="3.6.5.3"/>
    </reaction>
    <physiologicalReaction direction="left-to-right" evidence="2">
        <dbReference type="Rhea" id="RHEA:19670"/>
    </physiologicalReaction>
</comment>
<comment type="subunit">
    <text evidence="2">Monomer.</text>
</comment>
<comment type="subcellular location">
    <subcellularLocation>
        <location evidence="2">Cytoplasm</location>
    </subcellularLocation>
</comment>
<comment type="similarity">
    <text evidence="2">Belongs to the TRAFAC class translation factor GTPase superfamily. Classic translation factor GTPase family. EF-Tu/EF-1A subfamily.</text>
</comment>
<organism>
    <name type="scientific">Streptococcus pneumoniae (strain 70585)</name>
    <dbReference type="NCBI Taxonomy" id="488221"/>
    <lineage>
        <taxon>Bacteria</taxon>
        <taxon>Bacillati</taxon>
        <taxon>Bacillota</taxon>
        <taxon>Bacilli</taxon>
        <taxon>Lactobacillales</taxon>
        <taxon>Streptococcaceae</taxon>
        <taxon>Streptococcus</taxon>
    </lineage>
</organism>
<feature type="chain" id="PRO_1000201413" description="Elongation factor Tu">
    <location>
        <begin position="1"/>
        <end position="398"/>
    </location>
</feature>
<feature type="domain" description="tr-type G">
    <location>
        <begin position="10"/>
        <end position="207"/>
    </location>
</feature>
<feature type="region of interest" description="G1" evidence="1">
    <location>
        <begin position="19"/>
        <end position="26"/>
    </location>
</feature>
<feature type="region of interest" description="G2" evidence="1">
    <location>
        <begin position="63"/>
        <end position="67"/>
    </location>
</feature>
<feature type="region of interest" description="G3" evidence="1">
    <location>
        <begin position="84"/>
        <end position="87"/>
    </location>
</feature>
<feature type="region of interest" description="G4" evidence="1">
    <location>
        <begin position="139"/>
        <end position="142"/>
    </location>
</feature>
<feature type="region of interest" description="G5" evidence="1">
    <location>
        <begin position="177"/>
        <end position="179"/>
    </location>
</feature>
<feature type="binding site" evidence="2">
    <location>
        <begin position="19"/>
        <end position="26"/>
    </location>
    <ligand>
        <name>GTP</name>
        <dbReference type="ChEBI" id="CHEBI:37565"/>
    </ligand>
</feature>
<feature type="binding site" evidence="2">
    <location>
        <position position="26"/>
    </location>
    <ligand>
        <name>Mg(2+)</name>
        <dbReference type="ChEBI" id="CHEBI:18420"/>
    </ligand>
</feature>
<feature type="binding site" evidence="2">
    <location>
        <begin position="84"/>
        <end position="88"/>
    </location>
    <ligand>
        <name>GTP</name>
        <dbReference type="ChEBI" id="CHEBI:37565"/>
    </ligand>
</feature>
<feature type="binding site" evidence="2">
    <location>
        <begin position="139"/>
        <end position="142"/>
    </location>
    <ligand>
        <name>GTP</name>
        <dbReference type="ChEBI" id="CHEBI:37565"/>
    </ligand>
</feature>
<reference key="1">
    <citation type="journal article" date="2010" name="Genome Biol.">
        <title>Structure and dynamics of the pan-genome of Streptococcus pneumoniae and closely related species.</title>
        <authorList>
            <person name="Donati C."/>
            <person name="Hiller N.L."/>
            <person name="Tettelin H."/>
            <person name="Muzzi A."/>
            <person name="Croucher N.J."/>
            <person name="Angiuoli S.V."/>
            <person name="Oggioni M."/>
            <person name="Dunning Hotopp J.C."/>
            <person name="Hu F.Z."/>
            <person name="Riley D.R."/>
            <person name="Covacci A."/>
            <person name="Mitchell T.J."/>
            <person name="Bentley S.D."/>
            <person name="Kilian M."/>
            <person name="Ehrlich G.D."/>
            <person name="Rappuoli R."/>
            <person name="Moxon E.R."/>
            <person name="Masignani V."/>
        </authorList>
    </citation>
    <scope>NUCLEOTIDE SEQUENCE [LARGE SCALE GENOMIC DNA]</scope>
    <source>
        <strain>70585</strain>
    </source>
</reference>